<comment type="function">
    <text evidence="1 2 5">Oxidoreductase; part of the gene cluster that mediates the biosynthesis of squalestatin S1 (SQS1, also known as zaragozic acid A), a heavily oxidized fungal polyketide that offers potent cholesterol lowering activity by targeting squalene synthase (SS) (PubMed:28605916). SQS1 is composed of a 2,8-dioxobicyclic[3.2.1]octane-3,4,5-tricarboxyclic acid core that is connected to two lipophilic polyketide arms (PubMed:28605916). These initial steps feature the priming of an unusual benzoic acid starter unit onto the highly reducing polyketide synthase clz14, followed by oxaloacetate extension and product release to generate a tricarboxylic acid containing product (PubMed:28605916). The phenylalanine ammonia lyase (PAL) clz10 and the acyl-CoA ligase clz12 are involved in transforming phenylalanine into benzoyl-CoA (PubMed:28605916). The citrate synthase-like protein clz17 is involved in connecting the C-alpha-carbons of the hexaketide chain and oxaloacetate to afford the tricarboxylic acid unit (PubMed:28605916). The potential hydrolytic enzymes, clz11 and clz13, are in close proximity to pks2 and may participate in product release (PubMed:28605916). On the other side, the tetraketide arm is synthesized by a the squalestatin tetraketide synthase clz2 and enzymatically esterified to the core in the last biosynthetic step, by the acetyltransferase clz6 (By similarity). The biosynthesis of the tetraketide must involve 3 rounds of chain extension (By similarity). After the first and second rounds methyl-transfer occurs, and in all rounds of extension the ketoreductase and dehydratase are active (By similarity). The enoyl reductase and C-MeT of clz2 are not active in the final round of extension (By similarity). The acetyltransferase clz6 appears to have a broad substrate selectivity for its acyl CoA substrate, allowing the in vitro synthesis of novel squalestatins (By similarity). The biosynthesis of SQS1 requires several oxidative steps likely performed by oxidoreductases clz3, clz15 and clz16 (Probable). Finally, in support of the identification of the cluster as being responsible for SQS1 production, the cluster contains a gene encoding a putative squalene synthase (SS) clz20, suggesting a likely mechanism for self-resistance (Probable).</text>
</comment>
<comment type="pathway">
    <text evidence="5">Secondary metabolite biosynthesis.</text>
</comment>
<comment type="similarity">
    <text evidence="4">Belongs to the asaB hydroxylase/desaturase family.</text>
</comment>
<accession>A0A345BJP6</accession>
<name>CLZ15_COCLU</name>
<feature type="chain" id="PRO_0000452636" description="Oxidoreductase clz15">
    <location>
        <begin position="1"/>
        <end position="286"/>
    </location>
</feature>
<protein>
    <recommendedName>
        <fullName evidence="1">Oxidoreductase clz15</fullName>
        <ecNumber evidence="1">1.-.-.-</ecNumber>
    </recommendedName>
    <alternativeName>
        <fullName evidence="3">Squalestatin S1 biosynthesis cluster protein clz15</fullName>
    </alternativeName>
    <alternativeName>
        <fullName evidence="3">Zaragozic acid A biosynthesis cluster protein 15</fullName>
    </alternativeName>
</protein>
<sequence length="286" mass="32615">MATATLPATVGVIGLWDGTTDGKEGFMDYATGDTNVKQPKEYEIEVHDIRKLDPQPTLLNNGYELVDIPTVVTEEQFSESGKSEKGKAYIKDVYFAECKRIIQEVAGGVDTIIPVSFRMREQKGEKESTTKKLGNIESRYAPRPVAHLDRDTPTAITVLEETVGKEKAQELLSKHKRNPATMWPLCFLNHDRIPTWNYDTHVGHVWSLNDPRVSDRGEKTYDCVVKYDERYDYHYVSDLKPEECLVFCSFDSIPKYAMPHSAFWDNNVPADAPNRRSIEVRSLVFF</sequence>
<reference key="1">
    <citation type="journal article" date="2017" name="Org. Lett.">
        <title>Identification and heterologous production of a benzoyl-primed tricarboxylic acid polyketide intermediate from the zaragozic acid A biosynthetic pathway.</title>
        <authorList>
            <person name="Liu N."/>
            <person name="Hung Y.S."/>
            <person name="Gao S.S."/>
            <person name="Hang L."/>
            <person name="Zou Y."/>
            <person name="Chooi Y.H."/>
            <person name="Tang Y."/>
        </authorList>
    </citation>
    <scope>NUCLEOTIDE SEQUENCE [GENOMIC DNA]</scope>
    <scope>FUNCTION</scope>
    <scope>PATHWAY</scope>
    <source>
        <strain>ATCC 74067</strain>
    </source>
</reference>
<gene>
    <name evidence="3" type="primary">clz15</name>
</gene>
<proteinExistence type="inferred from homology"/>
<dbReference type="EC" id="1.-.-.-" evidence="1"/>
<dbReference type="EMBL" id="MF806533">
    <property type="protein sequence ID" value="AXF50659.1"/>
    <property type="molecule type" value="Genomic_DNA"/>
</dbReference>
<dbReference type="SMR" id="A0A345BJP6"/>
<dbReference type="GO" id="GO:0016491">
    <property type="term" value="F:oxidoreductase activity"/>
    <property type="evidence" value="ECO:0007669"/>
    <property type="project" value="UniProtKB-KW"/>
</dbReference>
<dbReference type="InterPro" id="IPR044053">
    <property type="entry name" value="AsaB-like"/>
</dbReference>
<dbReference type="NCBIfam" id="NF041278">
    <property type="entry name" value="CmcJ_NvfI_EfuI"/>
    <property type="match status" value="1"/>
</dbReference>
<dbReference type="PANTHER" id="PTHR34598">
    <property type="entry name" value="BLL6449 PROTEIN"/>
    <property type="match status" value="1"/>
</dbReference>
<dbReference type="PANTHER" id="PTHR34598:SF3">
    <property type="entry name" value="OXIDOREDUCTASE AN1597"/>
    <property type="match status" value="1"/>
</dbReference>
<evidence type="ECO:0000250" key="1">
    <source>
        <dbReference type="UniProtKB" id="A0A3G1DJG9"/>
    </source>
</evidence>
<evidence type="ECO:0000269" key="2">
    <source>
    </source>
</evidence>
<evidence type="ECO:0000303" key="3">
    <source>
    </source>
</evidence>
<evidence type="ECO:0000305" key="4"/>
<evidence type="ECO:0000305" key="5">
    <source>
    </source>
</evidence>
<keyword id="KW-0560">Oxidoreductase</keyword>
<organism>
    <name type="scientific">Cochliobolus lunatus</name>
    <name type="common">Filamentous fungus</name>
    <name type="synonym">Curvularia lunata</name>
    <dbReference type="NCBI Taxonomy" id="5503"/>
    <lineage>
        <taxon>Eukaryota</taxon>
        <taxon>Fungi</taxon>
        <taxon>Dikarya</taxon>
        <taxon>Ascomycota</taxon>
        <taxon>Pezizomycotina</taxon>
        <taxon>Dothideomycetes</taxon>
        <taxon>Pleosporomycetidae</taxon>
        <taxon>Pleosporales</taxon>
        <taxon>Pleosporineae</taxon>
        <taxon>Pleosporaceae</taxon>
        <taxon>Curvularia</taxon>
    </lineage>
</organism>